<name>ISCS_SALNS</name>
<organism>
    <name type="scientific">Salmonella newport (strain SL254)</name>
    <dbReference type="NCBI Taxonomy" id="423368"/>
    <lineage>
        <taxon>Bacteria</taxon>
        <taxon>Pseudomonadati</taxon>
        <taxon>Pseudomonadota</taxon>
        <taxon>Gammaproteobacteria</taxon>
        <taxon>Enterobacterales</taxon>
        <taxon>Enterobacteriaceae</taxon>
        <taxon>Salmonella</taxon>
    </lineage>
</organism>
<comment type="function">
    <text evidence="1">Master enzyme that delivers sulfur to a number of partners involved in Fe-S cluster assembly, tRNA modification or cofactor biosynthesis. Catalyzes the removal of elemental sulfur and selenium atoms from cysteine and selenocysteine to produce alanine. Functions as a sulfur delivery protein for Fe-S cluster synthesis onto IscU, an Fe-S scaffold assembly protein, as well as other S acceptor proteins. Also functions as a selenium delivery protein in the pathway for the biosynthesis of selenophosphate.</text>
</comment>
<comment type="catalytic activity">
    <reaction evidence="1">
        <text>(sulfur carrier)-H + L-cysteine = (sulfur carrier)-SH + L-alanine</text>
        <dbReference type="Rhea" id="RHEA:43892"/>
        <dbReference type="Rhea" id="RHEA-COMP:14737"/>
        <dbReference type="Rhea" id="RHEA-COMP:14739"/>
        <dbReference type="ChEBI" id="CHEBI:29917"/>
        <dbReference type="ChEBI" id="CHEBI:35235"/>
        <dbReference type="ChEBI" id="CHEBI:57972"/>
        <dbReference type="ChEBI" id="CHEBI:64428"/>
        <dbReference type="EC" id="2.8.1.7"/>
    </reaction>
</comment>
<comment type="cofactor">
    <cofactor evidence="1">
        <name>pyridoxal 5'-phosphate</name>
        <dbReference type="ChEBI" id="CHEBI:597326"/>
    </cofactor>
</comment>
<comment type="pathway">
    <text evidence="1">Cofactor biosynthesis; iron-sulfur cluster biosynthesis.</text>
</comment>
<comment type="subunit">
    <text evidence="1">Homodimer. Forms a heterotetramer with IscU, interacts with other sulfur acceptors.</text>
</comment>
<comment type="subcellular location">
    <subcellularLocation>
        <location evidence="1">Cytoplasm</location>
    </subcellularLocation>
</comment>
<comment type="similarity">
    <text evidence="1">Belongs to the class-V pyridoxal-phosphate-dependent aminotransferase family. NifS/IscS subfamily.</text>
</comment>
<evidence type="ECO:0000255" key="1">
    <source>
        <dbReference type="HAMAP-Rule" id="MF_00331"/>
    </source>
</evidence>
<reference key="1">
    <citation type="journal article" date="2011" name="J. Bacteriol.">
        <title>Comparative genomics of 28 Salmonella enterica isolates: evidence for CRISPR-mediated adaptive sublineage evolution.</title>
        <authorList>
            <person name="Fricke W.F."/>
            <person name="Mammel M.K."/>
            <person name="McDermott P.F."/>
            <person name="Tartera C."/>
            <person name="White D.G."/>
            <person name="Leclerc J.E."/>
            <person name="Ravel J."/>
            <person name="Cebula T.A."/>
        </authorList>
    </citation>
    <scope>NUCLEOTIDE SEQUENCE [LARGE SCALE GENOMIC DNA]</scope>
    <source>
        <strain>SL254</strain>
    </source>
</reference>
<protein>
    <recommendedName>
        <fullName evidence="1">Cysteine desulfurase IscS</fullName>
        <ecNumber evidence="1">2.8.1.7</ecNumber>
    </recommendedName>
</protein>
<proteinExistence type="inferred from homology"/>
<sequence>MKLPIYLDYSATTPVDPRVAEKMMQFLTLDGTFGNPASRSHRFGWQAEEAVDIARNQIAELVGADPREIVFTSGATESDNLAIKGAANFYQKKGKHIITSKTEHKAVLDTCRQLEREGFEVTYLAPQRNGIIDLNELEAAMRDDTILVSIMHVNNEIGVVQDIATIGEMCRARGIIYHVDATQSVGKLPIDLSQLKVDLMSFSGHKIYGPKGIGALYVRRKPRIRIEAQMHGGGHERGMRSGTLPVHQIVGMGEAYRIAKEEMETEMARLRGLRNRLWNGIKDIEEVYLNGDLEQGAPNILNVSFNYVEGESLIMALKDLAVSSGSACTSASLEPSYVLRALGMNDELAHSSIRFSLGRFTTEEEIDYTIDLVRKSIGRLRDLSPLWEMYKQGVDLNSIEWAHH</sequence>
<keyword id="KW-0001">2Fe-2S</keyword>
<keyword id="KW-0963">Cytoplasm</keyword>
<keyword id="KW-0408">Iron</keyword>
<keyword id="KW-0411">Iron-sulfur</keyword>
<keyword id="KW-0479">Metal-binding</keyword>
<keyword id="KW-0663">Pyridoxal phosphate</keyword>
<keyword id="KW-0808">Transferase</keyword>
<accession>B4T0S2</accession>
<feature type="chain" id="PRO_1000119645" description="Cysteine desulfurase IscS">
    <location>
        <begin position="1"/>
        <end position="404"/>
    </location>
</feature>
<feature type="active site" description="Cysteine persulfide intermediate" evidence="1">
    <location>
        <position position="328"/>
    </location>
</feature>
<feature type="binding site" evidence="1">
    <location>
        <begin position="75"/>
        <end position="76"/>
    </location>
    <ligand>
        <name>pyridoxal 5'-phosphate</name>
        <dbReference type="ChEBI" id="CHEBI:597326"/>
    </ligand>
</feature>
<feature type="binding site" evidence="1">
    <location>
        <position position="155"/>
    </location>
    <ligand>
        <name>pyridoxal 5'-phosphate</name>
        <dbReference type="ChEBI" id="CHEBI:597326"/>
    </ligand>
</feature>
<feature type="binding site" evidence="1">
    <location>
        <position position="183"/>
    </location>
    <ligand>
        <name>pyridoxal 5'-phosphate</name>
        <dbReference type="ChEBI" id="CHEBI:597326"/>
    </ligand>
</feature>
<feature type="binding site" evidence="1">
    <location>
        <begin position="203"/>
        <end position="205"/>
    </location>
    <ligand>
        <name>pyridoxal 5'-phosphate</name>
        <dbReference type="ChEBI" id="CHEBI:597326"/>
    </ligand>
</feature>
<feature type="binding site" evidence="1">
    <location>
        <position position="243"/>
    </location>
    <ligand>
        <name>pyridoxal 5'-phosphate</name>
        <dbReference type="ChEBI" id="CHEBI:597326"/>
    </ligand>
</feature>
<feature type="binding site" description="via persulfide group" evidence="1">
    <location>
        <position position="328"/>
    </location>
    <ligand>
        <name>[2Fe-2S] cluster</name>
        <dbReference type="ChEBI" id="CHEBI:190135"/>
        <note>ligand shared with IscU</note>
    </ligand>
</feature>
<feature type="modified residue" description="N6-(pyridoxal phosphate)lysine" evidence="1">
    <location>
        <position position="206"/>
    </location>
</feature>
<gene>
    <name evidence="1" type="primary">iscS</name>
    <name type="ordered locus">SNSL254_A2742</name>
</gene>
<dbReference type="EC" id="2.8.1.7" evidence="1"/>
<dbReference type="EMBL" id="CP001113">
    <property type="protein sequence ID" value="ACF65145.1"/>
    <property type="molecule type" value="Genomic_DNA"/>
</dbReference>
<dbReference type="RefSeq" id="WP_000775263.1">
    <property type="nucleotide sequence ID" value="NZ_CCMR01000001.1"/>
</dbReference>
<dbReference type="SMR" id="B4T0S2"/>
<dbReference type="KEGG" id="see:SNSL254_A2742"/>
<dbReference type="HOGENOM" id="CLU_003433_0_2_6"/>
<dbReference type="UniPathway" id="UPA00266"/>
<dbReference type="Proteomes" id="UP000008824">
    <property type="component" value="Chromosome"/>
</dbReference>
<dbReference type="GO" id="GO:1990221">
    <property type="term" value="C:L-cysteine desulfurase complex"/>
    <property type="evidence" value="ECO:0007669"/>
    <property type="project" value="UniProtKB-ARBA"/>
</dbReference>
<dbReference type="GO" id="GO:0051537">
    <property type="term" value="F:2 iron, 2 sulfur cluster binding"/>
    <property type="evidence" value="ECO:0007669"/>
    <property type="project" value="UniProtKB-UniRule"/>
</dbReference>
<dbReference type="GO" id="GO:0031071">
    <property type="term" value="F:cysteine desulfurase activity"/>
    <property type="evidence" value="ECO:0007669"/>
    <property type="project" value="UniProtKB-UniRule"/>
</dbReference>
<dbReference type="GO" id="GO:0046872">
    <property type="term" value="F:metal ion binding"/>
    <property type="evidence" value="ECO:0007669"/>
    <property type="project" value="UniProtKB-KW"/>
</dbReference>
<dbReference type="GO" id="GO:0030170">
    <property type="term" value="F:pyridoxal phosphate binding"/>
    <property type="evidence" value="ECO:0007669"/>
    <property type="project" value="UniProtKB-UniRule"/>
</dbReference>
<dbReference type="GO" id="GO:0044571">
    <property type="term" value="P:[2Fe-2S] cluster assembly"/>
    <property type="evidence" value="ECO:0007669"/>
    <property type="project" value="UniProtKB-UniRule"/>
</dbReference>
<dbReference type="FunFam" id="3.40.640.10:FF:000003">
    <property type="entry name" value="Cysteine desulfurase IscS"/>
    <property type="match status" value="1"/>
</dbReference>
<dbReference type="FunFam" id="3.90.1150.10:FF:000002">
    <property type="entry name" value="Cysteine desulfurase IscS"/>
    <property type="match status" value="1"/>
</dbReference>
<dbReference type="Gene3D" id="3.90.1150.10">
    <property type="entry name" value="Aspartate Aminotransferase, domain 1"/>
    <property type="match status" value="1"/>
</dbReference>
<dbReference type="Gene3D" id="3.40.640.10">
    <property type="entry name" value="Type I PLP-dependent aspartate aminotransferase-like (Major domain)"/>
    <property type="match status" value="1"/>
</dbReference>
<dbReference type="HAMAP" id="MF_00331">
    <property type="entry name" value="Cys_desulf_IscS"/>
    <property type="match status" value="1"/>
</dbReference>
<dbReference type="InterPro" id="IPR000192">
    <property type="entry name" value="Aminotrans_V_dom"/>
</dbReference>
<dbReference type="InterPro" id="IPR020578">
    <property type="entry name" value="Aminotrans_V_PyrdxlP_BS"/>
</dbReference>
<dbReference type="InterPro" id="IPR010240">
    <property type="entry name" value="Cys_deSase_IscS"/>
</dbReference>
<dbReference type="InterPro" id="IPR016454">
    <property type="entry name" value="Cysteine_dSase"/>
</dbReference>
<dbReference type="InterPro" id="IPR015424">
    <property type="entry name" value="PyrdxlP-dep_Trfase"/>
</dbReference>
<dbReference type="InterPro" id="IPR015421">
    <property type="entry name" value="PyrdxlP-dep_Trfase_major"/>
</dbReference>
<dbReference type="InterPro" id="IPR015422">
    <property type="entry name" value="PyrdxlP-dep_Trfase_small"/>
</dbReference>
<dbReference type="NCBIfam" id="TIGR02006">
    <property type="entry name" value="IscS"/>
    <property type="match status" value="1"/>
</dbReference>
<dbReference type="NCBIfam" id="NF002806">
    <property type="entry name" value="PRK02948.1"/>
    <property type="match status" value="1"/>
</dbReference>
<dbReference type="NCBIfam" id="NF010611">
    <property type="entry name" value="PRK14012.1"/>
    <property type="match status" value="1"/>
</dbReference>
<dbReference type="PANTHER" id="PTHR11601:SF34">
    <property type="entry name" value="CYSTEINE DESULFURASE"/>
    <property type="match status" value="1"/>
</dbReference>
<dbReference type="PANTHER" id="PTHR11601">
    <property type="entry name" value="CYSTEINE DESULFURYLASE FAMILY MEMBER"/>
    <property type="match status" value="1"/>
</dbReference>
<dbReference type="Pfam" id="PF00266">
    <property type="entry name" value="Aminotran_5"/>
    <property type="match status" value="1"/>
</dbReference>
<dbReference type="PIRSF" id="PIRSF005572">
    <property type="entry name" value="NifS"/>
    <property type="match status" value="1"/>
</dbReference>
<dbReference type="SUPFAM" id="SSF53383">
    <property type="entry name" value="PLP-dependent transferases"/>
    <property type="match status" value="1"/>
</dbReference>
<dbReference type="PROSITE" id="PS00595">
    <property type="entry name" value="AA_TRANSFER_CLASS_5"/>
    <property type="match status" value="1"/>
</dbReference>